<name>LGT_RICBR</name>
<sequence>MTFPNINPIIFSVGPLAVSWYSLSYVVGILFGWFYASKIIEKFPTQITKKNLEEFVTYAIIGIIVGGRLGYILLYNPYKYFSNPIEILKTYEGGMSFHGGAIGVIIAAYIFCKRHKLNFLSLTDIIAPVVPIGLFFGRIANFINGELYGRVTNSSIGVIFPDSDLNLRHPSQLYEAFFEGLVLFCILAYAVFKRNTIKKQGLNSGLFLMFYSLFRIIIEIFREPDVQIGFIFDSLTMGQILSMPLLLLGIYLIIKTECRSITK</sequence>
<accession>Q1RKL9</accession>
<gene>
    <name evidence="1" type="primary">lgt</name>
    <name type="ordered locus">RBE_0014</name>
</gene>
<organism>
    <name type="scientific">Rickettsia bellii (strain RML369-C)</name>
    <dbReference type="NCBI Taxonomy" id="336407"/>
    <lineage>
        <taxon>Bacteria</taxon>
        <taxon>Pseudomonadati</taxon>
        <taxon>Pseudomonadota</taxon>
        <taxon>Alphaproteobacteria</taxon>
        <taxon>Rickettsiales</taxon>
        <taxon>Rickettsiaceae</taxon>
        <taxon>Rickettsieae</taxon>
        <taxon>Rickettsia</taxon>
        <taxon>belli group</taxon>
    </lineage>
</organism>
<comment type="function">
    <text evidence="1">Catalyzes the transfer of the diacylglyceryl group from phosphatidylglycerol to the sulfhydryl group of the N-terminal cysteine of a prolipoprotein, the first step in the formation of mature lipoproteins.</text>
</comment>
<comment type="catalytic activity">
    <reaction evidence="1">
        <text>L-cysteinyl-[prolipoprotein] + a 1,2-diacyl-sn-glycero-3-phospho-(1'-sn-glycerol) = an S-1,2-diacyl-sn-glyceryl-L-cysteinyl-[prolipoprotein] + sn-glycerol 1-phosphate + H(+)</text>
        <dbReference type="Rhea" id="RHEA:56712"/>
        <dbReference type="Rhea" id="RHEA-COMP:14679"/>
        <dbReference type="Rhea" id="RHEA-COMP:14680"/>
        <dbReference type="ChEBI" id="CHEBI:15378"/>
        <dbReference type="ChEBI" id="CHEBI:29950"/>
        <dbReference type="ChEBI" id="CHEBI:57685"/>
        <dbReference type="ChEBI" id="CHEBI:64716"/>
        <dbReference type="ChEBI" id="CHEBI:140658"/>
        <dbReference type="EC" id="2.5.1.145"/>
    </reaction>
</comment>
<comment type="pathway">
    <text evidence="1">Protein modification; lipoprotein biosynthesis (diacylglyceryl transfer).</text>
</comment>
<comment type="subcellular location">
    <subcellularLocation>
        <location evidence="1">Cell inner membrane</location>
        <topology evidence="1">Multi-pass membrane protein</topology>
    </subcellularLocation>
</comment>
<comment type="similarity">
    <text evidence="1">Belongs to the Lgt family.</text>
</comment>
<proteinExistence type="inferred from homology"/>
<evidence type="ECO:0000255" key="1">
    <source>
        <dbReference type="HAMAP-Rule" id="MF_01147"/>
    </source>
</evidence>
<dbReference type="EC" id="2.5.1.145" evidence="1"/>
<dbReference type="EMBL" id="CP000087">
    <property type="protein sequence ID" value="ABE04095.1"/>
    <property type="molecule type" value="Genomic_DNA"/>
</dbReference>
<dbReference type="RefSeq" id="WP_011476710.1">
    <property type="nucleotide sequence ID" value="NC_007940.1"/>
</dbReference>
<dbReference type="SMR" id="Q1RKL9"/>
<dbReference type="KEGG" id="rbe:RBE_0014"/>
<dbReference type="eggNOG" id="COG0682">
    <property type="taxonomic scope" value="Bacteria"/>
</dbReference>
<dbReference type="HOGENOM" id="CLU_013386_1_0_5"/>
<dbReference type="OrthoDB" id="871140at2"/>
<dbReference type="UniPathway" id="UPA00664"/>
<dbReference type="Proteomes" id="UP000001951">
    <property type="component" value="Chromosome"/>
</dbReference>
<dbReference type="GO" id="GO:0005886">
    <property type="term" value="C:plasma membrane"/>
    <property type="evidence" value="ECO:0007669"/>
    <property type="project" value="UniProtKB-SubCell"/>
</dbReference>
<dbReference type="GO" id="GO:0008961">
    <property type="term" value="F:phosphatidylglycerol-prolipoprotein diacylglyceryl transferase activity"/>
    <property type="evidence" value="ECO:0007669"/>
    <property type="project" value="UniProtKB-UniRule"/>
</dbReference>
<dbReference type="GO" id="GO:0042158">
    <property type="term" value="P:lipoprotein biosynthetic process"/>
    <property type="evidence" value="ECO:0007669"/>
    <property type="project" value="UniProtKB-UniRule"/>
</dbReference>
<dbReference type="HAMAP" id="MF_01147">
    <property type="entry name" value="Lgt"/>
    <property type="match status" value="1"/>
</dbReference>
<dbReference type="InterPro" id="IPR001640">
    <property type="entry name" value="Lgt"/>
</dbReference>
<dbReference type="NCBIfam" id="TIGR00544">
    <property type="entry name" value="lgt"/>
    <property type="match status" value="1"/>
</dbReference>
<dbReference type="PANTHER" id="PTHR30589:SF0">
    <property type="entry name" value="PHOSPHATIDYLGLYCEROL--PROLIPOPROTEIN DIACYLGLYCERYL TRANSFERASE"/>
    <property type="match status" value="1"/>
</dbReference>
<dbReference type="PANTHER" id="PTHR30589">
    <property type="entry name" value="PROLIPOPROTEIN DIACYLGLYCERYL TRANSFERASE"/>
    <property type="match status" value="1"/>
</dbReference>
<dbReference type="Pfam" id="PF01790">
    <property type="entry name" value="LGT"/>
    <property type="match status" value="1"/>
</dbReference>
<dbReference type="PROSITE" id="PS01311">
    <property type="entry name" value="LGT"/>
    <property type="match status" value="1"/>
</dbReference>
<reference key="1">
    <citation type="journal article" date="2006" name="PLoS Genet.">
        <title>Genome sequence of Rickettsia bellii illuminates the role of amoebae in gene exchanges between intracellular pathogens.</title>
        <authorList>
            <person name="Ogata H."/>
            <person name="La Scola B."/>
            <person name="Audic S."/>
            <person name="Renesto P."/>
            <person name="Blanc G."/>
            <person name="Robert C."/>
            <person name="Fournier P.-E."/>
            <person name="Claverie J.-M."/>
            <person name="Raoult D."/>
        </authorList>
    </citation>
    <scope>NUCLEOTIDE SEQUENCE [LARGE SCALE GENOMIC DNA]</scope>
    <source>
        <strain>RML369-C</strain>
    </source>
</reference>
<keyword id="KW-0997">Cell inner membrane</keyword>
<keyword id="KW-1003">Cell membrane</keyword>
<keyword id="KW-0472">Membrane</keyword>
<keyword id="KW-0808">Transferase</keyword>
<keyword id="KW-0812">Transmembrane</keyword>
<keyword id="KW-1133">Transmembrane helix</keyword>
<feature type="chain" id="PRO_0000277925" description="Phosphatidylglycerol--prolipoprotein diacylglyceryl transferase">
    <location>
        <begin position="1"/>
        <end position="263"/>
    </location>
</feature>
<feature type="transmembrane region" description="Helical" evidence="1">
    <location>
        <begin position="16"/>
        <end position="36"/>
    </location>
</feature>
<feature type="transmembrane region" description="Helical" evidence="1">
    <location>
        <begin position="55"/>
        <end position="75"/>
    </location>
</feature>
<feature type="transmembrane region" description="Helical" evidence="1">
    <location>
        <begin position="92"/>
        <end position="112"/>
    </location>
</feature>
<feature type="transmembrane region" description="Helical" evidence="1">
    <location>
        <begin position="117"/>
        <end position="137"/>
    </location>
</feature>
<feature type="transmembrane region" description="Helical" evidence="1">
    <location>
        <begin position="172"/>
        <end position="192"/>
    </location>
</feature>
<feature type="transmembrane region" description="Helical" evidence="1">
    <location>
        <begin position="201"/>
        <end position="221"/>
    </location>
</feature>
<feature type="transmembrane region" description="Helical" evidence="1">
    <location>
        <begin position="234"/>
        <end position="254"/>
    </location>
</feature>
<feature type="binding site" evidence="1">
    <location>
        <position position="138"/>
    </location>
    <ligand>
        <name>a 1,2-diacyl-sn-glycero-3-phospho-(1'-sn-glycerol)</name>
        <dbReference type="ChEBI" id="CHEBI:64716"/>
    </ligand>
</feature>
<protein>
    <recommendedName>
        <fullName evidence="1">Phosphatidylglycerol--prolipoprotein diacylglyceryl transferase</fullName>
        <ecNumber evidence="1">2.5.1.145</ecNumber>
    </recommendedName>
</protein>